<sequence>MAMALQIIASSSSSPTITKSHLFSYPPLQSRYKASKPNLSSWFSLLGSSRFSPYIGLKHLGISISPKSSNPEKKRRCKSMMIRASLFGVGAPEALVIGVVALLVFGPKGLAEVARNLGKTLRTFQPTIRELQDVSRDFKSTLEREIGLDDISTPNVYNQNRTNPVQPPPPPPPPSVPSTEAPVTANDPNDSQSPKAYTSEDYLKFTEEQLKALSPAESQTEDQTQTQEPPQPTTVQTPTGESQPNGTARETTAASPPRQD</sequence>
<gene>
    <name type="primary">TATB</name>
    <name type="synonym">HCF106</name>
    <name type="ordered locus">At5g52440</name>
    <name type="ORF">K24M7.19</name>
</gene>
<reference key="1">
    <citation type="journal article" date="1999" name="J. Cell Biol.">
        <title>Component specificity for the thylakoidal Sec and Delta pH-dependent protein transport pathways.</title>
        <authorList>
            <person name="Mori M."/>
            <person name="Summer E.J."/>
            <person name="Ma X."/>
            <person name="Cline K."/>
        </authorList>
    </citation>
    <scope>NUCLEOTIDE SEQUENCE [MRNA]</scope>
</reference>
<reference key="2">
    <citation type="journal article" date="2000" name="DNA Res.">
        <title>Structural analysis of Arabidopsis thaliana chromosome 5. X. Sequence features of the regions of 3,076,755 bp covered by sixty P1 and TAC clones.</title>
        <authorList>
            <person name="Sato S."/>
            <person name="Nakamura Y."/>
            <person name="Kaneko T."/>
            <person name="Katoh T."/>
            <person name="Asamizu E."/>
            <person name="Kotani H."/>
            <person name="Tabata S."/>
        </authorList>
    </citation>
    <scope>NUCLEOTIDE SEQUENCE [LARGE SCALE GENOMIC DNA]</scope>
    <source>
        <strain>cv. Columbia</strain>
    </source>
</reference>
<reference key="3">
    <citation type="journal article" date="2017" name="Plant J.">
        <title>Araport11: a complete reannotation of the Arabidopsis thaliana reference genome.</title>
        <authorList>
            <person name="Cheng C.Y."/>
            <person name="Krishnakumar V."/>
            <person name="Chan A.P."/>
            <person name="Thibaud-Nissen F."/>
            <person name="Schobel S."/>
            <person name="Town C.D."/>
        </authorList>
    </citation>
    <scope>GENOME REANNOTATION</scope>
    <source>
        <strain>cv. Columbia</strain>
    </source>
</reference>
<reference key="4">
    <citation type="journal article" date="2002" name="Science">
        <title>Functional annotation of a full-length Arabidopsis cDNA collection.</title>
        <authorList>
            <person name="Seki M."/>
            <person name="Narusaka M."/>
            <person name="Kamiya A."/>
            <person name="Ishida J."/>
            <person name="Satou M."/>
            <person name="Sakurai T."/>
            <person name="Nakajima M."/>
            <person name="Enju A."/>
            <person name="Akiyama K."/>
            <person name="Oono Y."/>
            <person name="Muramatsu M."/>
            <person name="Hayashizaki Y."/>
            <person name="Kawai J."/>
            <person name="Carninci P."/>
            <person name="Itoh M."/>
            <person name="Ishii Y."/>
            <person name="Arakawa T."/>
            <person name="Shibata K."/>
            <person name="Shinagawa A."/>
            <person name="Shinozaki K."/>
        </authorList>
    </citation>
    <scope>NUCLEOTIDE SEQUENCE [LARGE SCALE MRNA]</scope>
    <source>
        <strain>cv. Columbia</strain>
    </source>
</reference>
<reference key="5">
    <citation type="journal article" date="2003" name="Science">
        <title>Empirical analysis of transcriptional activity in the Arabidopsis genome.</title>
        <authorList>
            <person name="Yamada K."/>
            <person name="Lim J."/>
            <person name="Dale J.M."/>
            <person name="Chen H."/>
            <person name="Shinn P."/>
            <person name="Palm C.J."/>
            <person name="Southwick A.M."/>
            <person name="Wu H.C."/>
            <person name="Kim C.J."/>
            <person name="Nguyen M."/>
            <person name="Pham P.K."/>
            <person name="Cheuk R.F."/>
            <person name="Karlin-Newmann G."/>
            <person name="Liu S.X."/>
            <person name="Lam B."/>
            <person name="Sakano H."/>
            <person name="Wu T."/>
            <person name="Yu G."/>
            <person name="Miranda M."/>
            <person name="Quach H.L."/>
            <person name="Tripp M."/>
            <person name="Chang C.H."/>
            <person name="Lee J.M."/>
            <person name="Toriumi M.J."/>
            <person name="Chan M.M."/>
            <person name="Tang C.C."/>
            <person name="Onodera C.S."/>
            <person name="Deng J.M."/>
            <person name="Akiyama K."/>
            <person name="Ansari Y."/>
            <person name="Arakawa T."/>
            <person name="Banh J."/>
            <person name="Banno F."/>
            <person name="Bowser L."/>
            <person name="Brooks S.Y."/>
            <person name="Carninci P."/>
            <person name="Chao Q."/>
            <person name="Choy N."/>
            <person name="Enju A."/>
            <person name="Goldsmith A.D."/>
            <person name="Gurjal M."/>
            <person name="Hansen N.F."/>
            <person name="Hayashizaki Y."/>
            <person name="Johnson-Hopson C."/>
            <person name="Hsuan V.W."/>
            <person name="Iida K."/>
            <person name="Karnes M."/>
            <person name="Khan S."/>
            <person name="Koesema E."/>
            <person name="Ishida J."/>
            <person name="Jiang P.X."/>
            <person name="Jones T."/>
            <person name="Kawai J."/>
            <person name="Kamiya A."/>
            <person name="Meyers C."/>
            <person name="Nakajima M."/>
            <person name="Narusaka M."/>
            <person name="Seki M."/>
            <person name="Sakurai T."/>
            <person name="Satou M."/>
            <person name="Tamse R."/>
            <person name="Vaysberg M."/>
            <person name="Wallender E.K."/>
            <person name="Wong C."/>
            <person name="Yamamura Y."/>
            <person name="Yuan S."/>
            <person name="Shinozaki K."/>
            <person name="Davis R.W."/>
            <person name="Theologis A."/>
            <person name="Ecker J.R."/>
        </authorList>
    </citation>
    <scope>NUCLEOTIDE SEQUENCE [LARGE SCALE MRNA]</scope>
    <source>
        <strain>cv. Columbia</strain>
    </source>
</reference>
<reference key="6">
    <citation type="journal article" date="2009" name="Biochim. Biophys. Acta">
        <title>Tat subunit stoichiometry in Arabidopsis thaliana challenges the proposed function of TatA as the translocation pore.</title>
        <authorList>
            <person name="Jakob M."/>
            <person name="Kaiser S."/>
            <person name="Gutensohn M."/>
            <person name="Hanner P."/>
            <person name="Kloesgen R.B."/>
        </authorList>
    </citation>
    <scope>SUBUNIT</scope>
</reference>
<proteinExistence type="evidence at protein level"/>
<keyword id="KW-0150">Chloroplast</keyword>
<keyword id="KW-0472">Membrane</keyword>
<keyword id="KW-0934">Plastid</keyword>
<keyword id="KW-0653">Protein transport</keyword>
<keyword id="KW-1185">Reference proteome</keyword>
<keyword id="KW-0793">Thylakoid</keyword>
<keyword id="KW-0809">Transit peptide</keyword>
<keyword id="KW-0811">Translocation</keyword>
<keyword id="KW-0812">Transmembrane</keyword>
<keyword id="KW-1133">Transmembrane helix</keyword>
<keyword id="KW-0813">Transport</keyword>
<name>TATB_ARATH</name>
<organism>
    <name type="scientific">Arabidopsis thaliana</name>
    <name type="common">Mouse-ear cress</name>
    <dbReference type="NCBI Taxonomy" id="3702"/>
    <lineage>
        <taxon>Eukaryota</taxon>
        <taxon>Viridiplantae</taxon>
        <taxon>Streptophyta</taxon>
        <taxon>Embryophyta</taxon>
        <taxon>Tracheophyta</taxon>
        <taxon>Spermatophyta</taxon>
        <taxon>Magnoliopsida</taxon>
        <taxon>eudicotyledons</taxon>
        <taxon>Gunneridae</taxon>
        <taxon>Pentapetalae</taxon>
        <taxon>rosids</taxon>
        <taxon>malvids</taxon>
        <taxon>Brassicales</taxon>
        <taxon>Brassicaceae</taxon>
        <taxon>Camelineae</taxon>
        <taxon>Arabidopsis</taxon>
    </lineage>
</organism>
<dbReference type="EMBL" id="AF139188">
    <property type="protein sequence ID" value="AAD32652.1"/>
    <property type="molecule type" value="mRNA"/>
</dbReference>
<dbReference type="EMBL" id="AB019226">
    <property type="protein sequence ID" value="BAB10541.1"/>
    <property type="molecule type" value="Genomic_DNA"/>
</dbReference>
<dbReference type="EMBL" id="CP002688">
    <property type="protein sequence ID" value="AED96214.1"/>
    <property type="molecule type" value="Genomic_DNA"/>
</dbReference>
<dbReference type="EMBL" id="AK118733">
    <property type="protein sequence ID" value="BAC43327.1"/>
    <property type="molecule type" value="mRNA"/>
</dbReference>
<dbReference type="EMBL" id="BT005414">
    <property type="protein sequence ID" value="AAO63834.1"/>
    <property type="molecule type" value="mRNA"/>
</dbReference>
<dbReference type="RefSeq" id="NP_200057.1">
    <property type="nucleotide sequence ID" value="NM_124623.4"/>
</dbReference>
<dbReference type="BioGRID" id="20565">
    <property type="interactions" value="1"/>
</dbReference>
<dbReference type="FunCoup" id="Q9XH75">
    <property type="interactions" value="1493"/>
</dbReference>
<dbReference type="STRING" id="3702.Q9XH75"/>
<dbReference type="TCDB" id="2.A.64.2.1">
    <property type="family name" value="the twin arginine targeting (tat) family"/>
</dbReference>
<dbReference type="iPTMnet" id="Q9XH75"/>
<dbReference type="PaxDb" id="3702-AT5G52440.1"/>
<dbReference type="ProteomicsDB" id="228044"/>
<dbReference type="EnsemblPlants" id="AT5G52440.1">
    <property type="protein sequence ID" value="AT5G52440.1"/>
    <property type="gene ID" value="AT5G52440"/>
</dbReference>
<dbReference type="GeneID" id="835320"/>
<dbReference type="Gramene" id="AT5G52440.1">
    <property type="protein sequence ID" value="AT5G52440.1"/>
    <property type="gene ID" value="AT5G52440"/>
</dbReference>
<dbReference type="KEGG" id="ath:AT5G52440"/>
<dbReference type="Araport" id="AT5G52440"/>
<dbReference type="TAIR" id="AT5G52440">
    <property type="gene designation" value="HCF106"/>
</dbReference>
<dbReference type="eggNOG" id="ENOG502QSWH">
    <property type="taxonomic scope" value="Eukaryota"/>
</dbReference>
<dbReference type="HOGENOM" id="CLU_072198_2_0_1"/>
<dbReference type="InParanoid" id="Q9XH75"/>
<dbReference type="OMA" id="NCAVSHT"/>
<dbReference type="OrthoDB" id="2017985at2759"/>
<dbReference type="PhylomeDB" id="Q9XH75"/>
<dbReference type="PRO" id="PR:Q9XH75"/>
<dbReference type="Proteomes" id="UP000006548">
    <property type="component" value="Chromosome 5"/>
</dbReference>
<dbReference type="ExpressionAtlas" id="Q9XH75">
    <property type="expression patterns" value="baseline and differential"/>
</dbReference>
<dbReference type="GO" id="GO:0009507">
    <property type="term" value="C:chloroplast"/>
    <property type="evidence" value="ECO:0000314"/>
    <property type="project" value="TAIR"/>
</dbReference>
<dbReference type="GO" id="GO:0009941">
    <property type="term" value="C:chloroplast envelope"/>
    <property type="evidence" value="ECO:0007005"/>
    <property type="project" value="TAIR"/>
</dbReference>
<dbReference type="GO" id="GO:0009534">
    <property type="term" value="C:chloroplast thylakoid"/>
    <property type="evidence" value="ECO:0007005"/>
    <property type="project" value="TAIR"/>
</dbReference>
<dbReference type="GO" id="GO:0009535">
    <property type="term" value="C:chloroplast thylakoid membrane"/>
    <property type="evidence" value="ECO:0007005"/>
    <property type="project" value="TAIR"/>
</dbReference>
<dbReference type="GO" id="GO:0009536">
    <property type="term" value="C:plastid"/>
    <property type="evidence" value="ECO:0007005"/>
    <property type="project" value="TAIR"/>
</dbReference>
<dbReference type="GO" id="GO:0033281">
    <property type="term" value="C:TAT protein transport complex"/>
    <property type="evidence" value="ECO:0000314"/>
    <property type="project" value="UniProtKB"/>
</dbReference>
<dbReference type="GO" id="GO:0009579">
    <property type="term" value="C:thylakoid"/>
    <property type="evidence" value="ECO:0000314"/>
    <property type="project" value="TAIR"/>
</dbReference>
<dbReference type="GO" id="GO:0009977">
    <property type="term" value="F:proton motive force dependent protein transmembrane transporter activity"/>
    <property type="evidence" value="ECO:0000314"/>
    <property type="project" value="TAIR"/>
</dbReference>
<dbReference type="GO" id="GO:1902458">
    <property type="term" value="P:positive regulation of stomatal opening"/>
    <property type="evidence" value="ECO:0000315"/>
    <property type="project" value="TAIR"/>
</dbReference>
<dbReference type="GO" id="GO:0045038">
    <property type="term" value="P:protein import into chloroplast thylakoid membrane"/>
    <property type="evidence" value="ECO:0000314"/>
    <property type="project" value="TAIR"/>
</dbReference>
<dbReference type="GO" id="GO:0043953">
    <property type="term" value="P:protein transport by the Tat complex"/>
    <property type="evidence" value="ECO:0007669"/>
    <property type="project" value="InterPro"/>
</dbReference>
<dbReference type="GO" id="GO:1903426">
    <property type="term" value="P:regulation of reactive oxygen species biosynthetic process"/>
    <property type="evidence" value="ECO:0000315"/>
    <property type="project" value="TAIR"/>
</dbReference>
<dbReference type="GO" id="GO:2000070">
    <property type="term" value="P:regulation of response to water deprivation"/>
    <property type="evidence" value="ECO:0000315"/>
    <property type="project" value="TAIR"/>
</dbReference>
<dbReference type="GO" id="GO:0009409">
    <property type="term" value="P:response to cold"/>
    <property type="evidence" value="ECO:0000315"/>
    <property type="project" value="TAIR"/>
</dbReference>
<dbReference type="FunFam" id="1.20.5.3310:FF:000003">
    <property type="entry name" value="Sec-independent protein translocase protein TATB, chloroplastic"/>
    <property type="match status" value="1"/>
</dbReference>
<dbReference type="Gene3D" id="1.20.5.3310">
    <property type="match status" value="1"/>
</dbReference>
<dbReference type="InterPro" id="IPR003369">
    <property type="entry name" value="TatA/B/E"/>
</dbReference>
<dbReference type="InterPro" id="IPR006312">
    <property type="entry name" value="TatA/E"/>
</dbReference>
<dbReference type="NCBIfam" id="TIGR01411">
    <property type="entry name" value="tatAE"/>
    <property type="match status" value="1"/>
</dbReference>
<dbReference type="PANTHER" id="PTHR33162">
    <property type="entry name" value="SEC-INDEPENDENT PROTEIN TRANSLOCASE PROTEIN TATA, CHLOROPLASTIC"/>
    <property type="match status" value="1"/>
</dbReference>
<dbReference type="PANTHER" id="PTHR33162:SF3">
    <property type="entry name" value="SEC-INDEPENDENT PROTEIN TRANSLOCASE PROTEIN TATB, CHLOROPLASTIC"/>
    <property type="match status" value="1"/>
</dbReference>
<dbReference type="Pfam" id="PF02416">
    <property type="entry name" value="TatA_B_E"/>
    <property type="match status" value="1"/>
</dbReference>
<accession>Q9XH75</accession>
<evidence type="ECO:0000250" key="1"/>
<evidence type="ECO:0000255" key="2"/>
<evidence type="ECO:0000256" key="3">
    <source>
        <dbReference type="SAM" id="MobiDB-lite"/>
    </source>
</evidence>
<evidence type="ECO:0000269" key="4">
    <source>
    </source>
</evidence>
<evidence type="ECO:0000305" key="5"/>
<protein>
    <recommendedName>
        <fullName>Sec-independent protein translocase protein TATB, chloroplastic</fullName>
    </recommendedName>
    <alternativeName>
        <fullName>Protein HIGH CHLOROPHYLL FLUORESCENCE 106</fullName>
    </alternativeName>
    <alternativeName>
        <fullName>Protein TWIN-ARGININE TRANSLOCATION B</fullName>
    </alternativeName>
</protein>
<feature type="transit peptide" description="Chloroplast" evidence="2">
    <location>
        <begin position="1"/>
        <end position="83"/>
    </location>
</feature>
<feature type="chain" id="PRO_0000419914" description="Sec-independent protein translocase protein TATB, chloroplastic">
    <location>
        <begin position="84"/>
        <end position="260"/>
    </location>
</feature>
<feature type="topological domain" description="Lumenal" evidence="2">
    <location>
        <begin position="84"/>
        <end position="85"/>
    </location>
</feature>
<feature type="transmembrane region" description="Helical" evidence="2">
    <location>
        <begin position="86"/>
        <end position="106"/>
    </location>
</feature>
<feature type="topological domain" description="Stromal" evidence="2">
    <location>
        <begin position="107"/>
        <end position="260"/>
    </location>
</feature>
<feature type="region of interest" description="Disordered" evidence="3">
    <location>
        <begin position="146"/>
        <end position="260"/>
    </location>
</feature>
<feature type="compositionally biased region" description="Polar residues" evidence="3">
    <location>
        <begin position="152"/>
        <end position="163"/>
    </location>
</feature>
<feature type="compositionally biased region" description="Pro residues" evidence="3">
    <location>
        <begin position="165"/>
        <end position="176"/>
    </location>
</feature>
<feature type="compositionally biased region" description="Polar residues" evidence="3">
    <location>
        <begin position="186"/>
        <end position="196"/>
    </location>
</feature>
<feature type="compositionally biased region" description="Basic and acidic residues" evidence="3">
    <location>
        <begin position="201"/>
        <end position="210"/>
    </location>
</feature>
<feature type="compositionally biased region" description="Low complexity" evidence="3">
    <location>
        <begin position="221"/>
        <end position="239"/>
    </location>
</feature>
<feature type="compositionally biased region" description="Polar residues" evidence="3">
    <location>
        <begin position="240"/>
        <end position="254"/>
    </location>
</feature>
<comment type="function">
    <text evidence="1">Part of the twin-arginine translocation (Tat) system that transports large folded proteins containing a characteristic twin-arginine motif in their signal peptide across the thylakoid membrane. Involved in delta pH-dependent protein transport required for chloroplast development, especially thylakoid membrane formation. TATC and TATB mediate precursor recognition, whereas TATA facilitates translocation (By similarity).</text>
</comment>
<comment type="subunit">
    <text evidence="4">In thylakoid membranes, TATC and TATB form a large receptor complex, containing about eight TATC-TATB pairs, which binds the precursor protein. Twin arginine signal peptide promotes pH-triggered docking of TATA oligomers to TATC-TATB receptor complex, inducing a conformational switch of TATA that results in activation of the translocase. TATA dissociates from TATC-TATB upon completion of translocation.</text>
</comment>
<comment type="subcellular location">
    <subcellularLocation>
        <location evidence="1">Plastid</location>
        <location evidence="1">Chloroplast thylakoid membrane</location>
        <topology evidence="1">Single-pass membrane protein</topology>
    </subcellularLocation>
    <text evidence="1">The C-terminus is located in the stroma.</text>
</comment>
<comment type="similarity">
    <text evidence="5">Belongs to the TatB family.</text>
</comment>